<protein>
    <recommendedName>
        <fullName evidence="8">Glycine betaine/proline betaine-binding periplasmic protein</fullName>
    </recommendedName>
    <alternativeName>
        <fullName evidence="7">GBBP</fullName>
    </alternativeName>
</protein>
<evidence type="ECO:0000269" key="1">
    <source>
    </source>
</evidence>
<evidence type="ECO:0000269" key="2">
    <source>
    </source>
</evidence>
<evidence type="ECO:0000269" key="3">
    <source>
    </source>
</evidence>
<evidence type="ECO:0000269" key="4">
    <source>
    </source>
</evidence>
<evidence type="ECO:0000269" key="5">
    <source>
    </source>
</evidence>
<evidence type="ECO:0000303" key="6">
    <source>
    </source>
</evidence>
<evidence type="ECO:0000303" key="7">
    <source>
    </source>
</evidence>
<evidence type="ECO:0000305" key="8"/>
<evidence type="ECO:0007829" key="9">
    <source>
        <dbReference type="PDB" id="1R9L"/>
    </source>
</evidence>
<comment type="function">
    <text evidence="2 3 4 5">Part of the ProU ABC transporter complex involved in glycine betaine and proline betaine uptake. Binds glycine betaine and proline betaine with high affinity.</text>
</comment>
<comment type="subunit">
    <text evidence="3">The complex is composed of two ATP-binding proteins (ProV), two transmembrane proteins (ProW) and a solute-binding protein (ProX).</text>
</comment>
<comment type="interaction">
    <interactant intactId="EBI-1129961">
        <id>P0AFM2</id>
    </interactant>
    <interactant intactId="EBI-1115563">
        <id>P77165</id>
        <label>paoA</label>
    </interactant>
    <organismsDiffer>false</organismsDiffer>
    <experiments>2</experiments>
</comment>
<comment type="subcellular location">
    <subcellularLocation>
        <location evidence="4 5">Periplasm</location>
    </subcellularLocation>
</comment>
<comment type="induction">
    <text evidence="1">By cold shock in a PNPase-dependent fashion.</text>
</comment>
<dbReference type="EMBL" id="M24856">
    <property type="protein sequence ID" value="AAA24429.1"/>
    <property type="molecule type" value="Genomic_DNA"/>
</dbReference>
<dbReference type="EMBL" id="U00096">
    <property type="protein sequence ID" value="AAC75726.1"/>
    <property type="molecule type" value="Genomic_DNA"/>
</dbReference>
<dbReference type="EMBL" id="AP009048">
    <property type="protein sequence ID" value="BAA16544.1"/>
    <property type="molecule type" value="Genomic_DNA"/>
</dbReference>
<dbReference type="PIR" id="JS0130">
    <property type="entry name" value="BLECGP"/>
</dbReference>
<dbReference type="RefSeq" id="NP_417165.1">
    <property type="nucleotide sequence ID" value="NC_000913.3"/>
</dbReference>
<dbReference type="RefSeq" id="WP_001216525.1">
    <property type="nucleotide sequence ID" value="NZ_LN832404.1"/>
</dbReference>
<dbReference type="PDB" id="1R9L">
    <property type="method" value="X-ray"/>
    <property type="resolution" value="1.59 A"/>
    <property type="chains" value="A=22-330"/>
</dbReference>
<dbReference type="PDB" id="1R9Q">
    <property type="method" value="X-ray"/>
    <property type="resolution" value="2.05 A"/>
    <property type="chains" value="A=22-330"/>
</dbReference>
<dbReference type="PDBsum" id="1R9L"/>
<dbReference type="PDBsum" id="1R9Q"/>
<dbReference type="SMR" id="P0AFM2"/>
<dbReference type="BioGRID" id="4262270">
    <property type="interactions" value="12"/>
</dbReference>
<dbReference type="BioGRID" id="851497">
    <property type="interactions" value="1"/>
</dbReference>
<dbReference type="ComplexPortal" id="CPX-2126">
    <property type="entry name" value="Glycine/Proline betaine ABC transporter complex"/>
</dbReference>
<dbReference type="FunCoup" id="P0AFM2">
    <property type="interactions" value="187"/>
</dbReference>
<dbReference type="IntAct" id="P0AFM2">
    <property type="interactions" value="2"/>
</dbReference>
<dbReference type="STRING" id="511145.b2679"/>
<dbReference type="DrugBank" id="DB04284">
    <property type="generic name" value="L-proline betaine"/>
</dbReference>
<dbReference type="DrugBank" id="DB04455">
    <property type="generic name" value="N,N,N-trimethylglycinium"/>
</dbReference>
<dbReference type="TCDB" id="3.A.1.12.1">
    <property type="family name" value="the atp-binding cassette (abc) superfamily"/>
</dbReference>
<dbReference type="jPOST" id="P0AFM2"/>
<dbReference type="PaxDb" id="511145-b2679"/>
<dbReference type="EnsemblBacteria" id="AAC75726">
    <property type="protein sequence ID" value="AAC75726"/>
    <property type="gene ID" value="b2679"/>
</dbReference>
<dbReference type="GeneID" id="86860772"/>
<dbReference type="GeneID" id="947165"/>
<dbReference type="KEGG" id="ecj:JW2654"/>
<dbReference type="KEGG" id="eco:b2679"/>
<dbReference type="KEGG" id="ecoc:C3026_14760"/>
<dbReference type="PATRIC" id="fig|1411691.4.peg.4062"/>
<dbReference type="EchoBASE" id="EB0766"/>
<dbReference type="eggNOG" id="COG2113">
    <property type="taxonomic scope" value="Bacteria"/>
</dbReference>
<dbReference type="HOGENOM" id="CLU_070055_0_0_6"/>
<dbReference type="InParanoid" id="P0AFM2"/>
<dbReference type="OMA" id="EHNQGNY"/>
<dbReference type="OrthoDB" id="9787902at2"/>
<dbReference type="PhylomeDB" id="P0AFM2"/>
<dbReference type="BioCyc" id="EcoCyc:PROX-MONOMER"/>
<dbReference type="BioCyc" id="MetaCyc:PROX-MONOMER"/>
<dbReference type="EvolutionaryTrace" id="P0AFM2"/>
<dbReference type="PRO" id="PR:P0AFM2"/>
<dbReference type="Proteomes" id="UP000000625">
    <property type="component" value="Chromosome"/>
</dbReference>
<dbReference type="GO" id="GO:0016020">
    <property type="term" value="C:membrane"/>
    <property type="evidence" value="ECO:0000314"/>
    <property type="project" value="ComplexPortal"/>
</dbReference>
<dbReference type="GO" id="GO:0030288">
    <property type="term" value="C:outer membrane-bounded periplasmic space"/>
    <property type="evidence" value="ECO:0000314"/>
    <property type="project" value="EcoCyc"/>
</dbReference>
<dbReference type="GO" id="GO:1990222">
    <property type="term" value="C:ProVWX complex"/>
    <property type="evidence" value="ECO:0000353"/>
    <property type="project" value="ComplexPortal"/>
</dbReference>
<dbReference type="GO" id="GO:0050997">
    <property type="term" value="F:quaternary ammonium group binding"/>
    <property type="evidence" value="ECO:0000353"/>
    <property type="project" value="EcoCyc"/>
</dbReference>
<dbReference type="GO" id="GO:0022857">
    <property type="term" value="F:transmembrane transporter activity"/>
    <property type="evidence" value="ECO:0007669"/>
    <property type="project" value="InterPro"/>
</dbReference>
<dbReference type="GO" id="GO:0089718">
    <property type="term" value="P:amino acid import across plasma membrane"/>
    <property type="evidence" value="ECO:0000314"/>
    <property type="project" value="ComplexPortal"/>
</dbReference>
<dbReference type="GO" id="GO:0071470">
    <property type="term" value="P:cellular response to osmotic stress"/>
    <property type="evidence" value="ECO:0000314"/>
    <property type="project" value="ComplexPortal"/>
</dbReference>
<dbReference type="GO" id="GO:0031460">
    <property type="term" value="P:glycine betaine transport"/>
    <property type="evidence" value="ECO:0000314"/>
    <property type="project" value="ComplexPortal"/>
</dbReference>
<dbReference type="GO" id="GO:1903804">
    <property type="term" value="P:glycine import across plasma membrane"/>
    <property type="evidence" value="ECO:0000314"/>
    <property type="project" value="ComplexPortal"/>
</dbReference>
<dbReference type="GO" id="GO:0006972">
    <property type="term" value="P:hyperosmotic response"/>
    <property type="evidence" value="ECO:0000314"/>
    <property type="project" value="EcoCyc"/>
</dbReference>
<dbReference type="CDD" id="cd13638">
    <property type="entry name" value="PBP2_EcProx_like"/>
    <property type="match status" value="1"/>
</dbReference>
<dbReference type="Gene3D" id="3.40.190.100">
    <property type="entry name" value="Glycine betaine-binding periplasmic protein, domain 2"/>
    <property type="match status" value="1"/>
</dbReference>
<dbReference type="Gene3D" id="3.40.190.10">
    <property type="entry name" value="Periplasmic binding protein-like II"/>
    <property type="match status" value="1"/>
</dbReference>
<dbReference type="InterPro" id="IPR007210">
    <property type="entry name" value="ABC_Gly_betaine_transp_sub-bd"/>
</dbReference>
<dbReference type="NCBIfam" id="NF008334">
    <property type="entry name" value="PRK11119.1"/>
    <property type="match status" value="1"/>
</dbReference>
<dbReference type="Pfam" id="PF04069">
    <property type="entry name" value="OpuAC"/>
    <property type="match status" value="1"/>
</dbReference>
<dbReference type="SUPFAM" id="SSF53850">
    <property type="entry name" value="Periplasmic binding protein-like II"/>
    <property type="match status" value="1"/>
</dbReference>
<sequence length="330" mass="36023">MRHSVLFATAFATLISTQTFAADLPGKGITVNPVQSTITEETFQTLLVSRALEKLGYTVNKPSEVDYNVGYTSLASGDATFTAVNWTPLHDNMYEAAGGDKKFYREGVFVNGAAQGYLIDKKTADQYKITNIAQLKDPKIAKLFDTNGDGKADLTGCNPGWGCEGAINHQLAAYELTNTVTHNQGNYAAMMADTISRYKEGKPVFYYTWTPYWVSNELKPGKDVVWLQVPFSALPGDKNADTKLPNGANYGFPVSTMHIVANKAWAEKNPAAAKLFAIMQLPVADINAQNAIMHDGKASEGDIQGHVDGWIKAHQQQFDGWVNEALAAQK</sequence>
<name>PROX_ECOLI</name>
<proteinExistence type="evidence at protein level"/>
<feature type="signal peptide" evidence="4">
    <location>
        <begin position="1"/>
        <end position="21"/>
    </location>
</feature>
<feature type="chain" id="PRO_0000031847" description="Glycine betaine/proline betaine-binding periplasmic protein">
    <location>
        <begin position="22"/>
        <end position="330"/>
    </location>
</feature>
<feature type="binding site" evidence="2">
    <location>
        <position position="86"/>
    </location>
    <ligand>
        <name>substrate</name>
    </ligand>
</feature>
<feature type="binding site" evidence="2">
    <location>
        <position position="90"/>
    </location>
    <ligand>
        <name>substrate</name>
    </ligand>
</feature>
<feature type="binding site" evidence="2">
    <location>
        <begin position="161"/>
        <end position="163"/>
    </location>
    <ligand>
        <name>substrate</name>
    </ligand>
</feature>
<feature type="disulfide bond" evidence="2">
    <location>
        <begin position="157"/>
        <end position="163"/>
    </location>
</feature>
<feature type="turn" evidence="9">
    <location>
        <begin position="25"/>
        <end position="28"/>
    </location>
</feature>
<feature type="strand" evidence="9">
    <location>
        <begin position="33"/>
        <end position="35"/>
    </location>
</feature>
<feature type="helix" evidence="9">
    <location>
        <begin position="39"/>
        <end position="41"/>
    </location>
</feature>
<feature type="helix" evidence="9">
    <location>
        <begin position="42"/>
        <end position="54"/>
    </location>
</feature>
<feature type="helix" evidence="9">
    <location>
        <begin position="67"/>
        <end position="76"/>
    </location>
</feature>
<feature type="strand" evidence="9">
    <location>
        <begin position="77"/>
        <end position="79"/>
    </location>
</feature>
<feature type="strand" evidence="9">
    <location>
        <begin position="81"/>
        <end position="87"/>
    </location>
</feature>
<feature type="turn" evidence="9">
    <location>
        <begin position="88"/>
        <end position="90"/>
    </location>
</feature>
<feature type="helix" evidence="9">
    <location>
        <begin position="91"/>
        <end position="96"/>
    </location>
</feature>
<feature type="helix" evidence="9">
    <location>
        <begin position="99"/>
        <end position="101"/>
    </location>
</feature>
<feature type="strand" evidence="9">
    <location>
        <begin position="103"/>
        <end position="105"/>
    </location>
</feature>
<feature type="strand" evidence="9">
    <location>
        <begin position="109"/>
        <end position="120"/>
    </location>
</feature>
<feature type="helix" evidence="9">
    <location>
        <begin position="121"/>
        <end position="127"/>
    </location>
</feature>
<feature type="helix" evidence="9">
    <location>
        <begin position="132"/>
        <end position="136"/>
    </location>
</feature>
<feature type="helix" evidence="9">
    <location>
        <begin position="138"/>
        <end position="141"/>
    </location>
</feature>
<feature type="helix" evidence="9">
    <location>
        <begin position="142"/>
        <end position="144"/>
    </location>
</feature>
<feature type="strand" evidence="9">
    <location>
        <begin position="146"/>
        <end position="155"/>
    </location>
</feature>
<feature type="helix" evidence="9">
    <location>
        <begin position="162"/>
        <end position="173"/>
    </location>
</feature>
<feature type="turn" evidence="9">
    <location>
        <begin position="177"/>
        <end position="179"/>
    </location>
</feature>
<feature type="strand" evidence="9">
    <location>
        <begin position="180"/>
        <end position="183"/>
    </location>
</feature>
<feature type="helix" evidence="9">
    <location>
        <begin position="187"/>
        <end position="199"/>
    </location>
</feature>
<feature type="strand" evidence="9">
    <location>
        <begin position="205"/>
        <end position="213"/>
    </location>
</feature>
<feature type="helix" evidence="9">
    <location>
        <begin position="214"/>
        <end position="217"/>
    </location>
</feature>
<feature type="turn" evidence="9">
    <location>
        <begin position="220"/>
        <end position="222"/>
    </location>
</feature>
<feature type="strand" evidence="9">
    <location>
        <begin position="223"/>
        <end position="226"/>
    </location>
</feature>
<feature type="strand" evidence="9">
    <location>
        <begin position="254"/>
        <end position="262"/>
    </location>
</feature>
<feature type="helix" evidence="9">
    <location>
        <begin position="263"/>
        <end position="268"/>
    </location>
</feature>
<feature type="helix" evidence="9">
    <location>
        <begin position="270"/>
        <end position="278"/>
    </location>
</feature>
<feature type="helix" evidence="9">
    <location>
        <begin position="283"/>
        <end position="295"/>
    </location>
</feature>
<feature type="helix" evidence="9">
    <location>
        <begin position="300"/>
        <end position="313"/>
    </location>
</feature>
<feature type="helix" evidence="9">
    <location>
        <begin position="315"/>
        <end position="326"/>
    </location>
</feature>
<gene>
    <name evidence="6" type="primary">proX</name>
    <name evidence="7" type="synonym">proU</name>
    <name type="ordered locus">b2679</name>
    <name type="ordered locus">JW2654</name>
</gene>
<accession>P0AFM2</accession>
<accession>P14177</accession>
<keyword id="KW-0002">3D-structure</keyword>
<keyword id="KW-0029">Amino-acid transport</keyword>
<keyword id="KW-0903">Direct protein sequencing</keyword>
<keyword id="KW-1015">Disulfide bond</keyword>
<keyword id="KW-0574">Periplasm</keyword>
<keyword id="KW-1185">Reference proteome</keyword>
<keyword id="KW-0732">Signal</keyword>
<keyword id="KW-0813">Transport</keyword>
<reference key="1">
    <citation type="journal article" date="1989" name="J. Bacteriol.">
        <title>Nucleotide sequence of the osmoregulatory proU operon of Escherichia coli.</title>
        <authorList>
            <person name="Gowrishankar J."/>
        </authorList>
    </citation>
    <scope>NUCLEOTIDE SEQUENCE [GENOMIC DNA]</scope>
</reference>
<reference key="2">
    <citation type="journal article" date="1990" name="J. Bacteriol.">
        <authorList>
            <person name="Gowrishankar J."/>
        </authorList>
    </citation>
    <scope>ERRATUM OF PUBMED:2649479</scope>
</reference>
<reference key="3">
    <citation type="journal article" date="1997" name="DNA Res.">
        <title>Construction of a contiguous 874-kb sequence of the Escherichia coli-K12 genome corresponding to 50.0-68.8 min on the linkage map and analysis of its sequence features.</title>
        <authorList>
            <person name="Yamamoto Y."/>
            <person name="Aiba H."/>
            <person name="Baba T."/>
            <person name="Hayashi K."/>
            <person name="Inada T."/>
            <person name="Isono K."/>
            <person name="Itoh T."/>
            <person name="Kimura S."/>
            <person name="Kitagawa M."/>
            <person name="Makino K."/>
            <person name="Miki T."/>
            <person name="Mitsuhashi N."/>
            <person name="Mizobuchi K."/>
            <person name="Mori H."/>
            <person name="Nakade S."/>
            <person name="Nakamura Y."/>
            <person name="Nashimoto H."/>
            <person name="Oshima T."/>
            <person name="Oyama S."/>
            <person name="Saito N."/>
            <person name="Sampei G."/>
            <person name="Satoh Y."/>
            <person name="Sivasundaram S."/>
            <person name="Tagami H."/>
            <person name="Takahashi H."/>
            <person name="Takeda J."/>
            <person name="Takemoto K."/>
            <person name="Uehara K."/>
            <person name="Wada C."/>
            <person name="Yamagata S."/>
            <person name="Horiuchi T."/>
        </authorList>
    </citation>
    <scope>NUCLEOTIDE SEQUENCE [LARGE SCALE GENOMIC DNA]</scope>
    <source>
        <strain>K12 / W3110 / ATCC 27325 / DSM 5911</strain>
    </source>
</reference>
<reference key="4">
    <citation type="journal article" date="1997" name="Science">
        <title>The complete genome sequence of Escherichia coli K-12.</title>
        <authorList>
            <person name="Blattner F.R."/>
            <person name="Plunkett G. III"/>
            <person name="Bloch C.A."/>
            <person name="Perna N.T."/>
            <person name="Burland V."/>
            <person name="Riley M."/>
            <person name="Collado-Vides J."/>
            <person name="Glasner J.D."/>
            <person name="Rode C.K."/>
            <person name="Mayhew G.F."/>
            <person name="Gregor J."/>
            <person name="Davis N.W."/>
            <person name="Kirkpatrick H.A."/>
            <person name="Goeden M.A."/>
            <person name="Rose D.J."/>
            <person name="Mau B."/>
            <person name="Shao Y."/>
        </authorList>
    </citation>
    <scope>NUCLEOTIDE SEQUENCE [LARGE SCALE GENOMIC DNA]</scope>
    <source>
        <strain>K12 / MG1655 / ATCC 47076</strain>
    </source>
</reference>
<reference key="5">
    <citation type="journal article" date="2006" name="Mol. Syst. Biol.">
        <title>Highly accurate genome sequences of Escherichia coli K-12 strains MG1655 and W3110.</title>
        <authorList>
            <person name="Hayashi K."/>
            <person name="Morooka N."/>
            <person name="Yamamoto Y."/>
            <person name="Fujita K."/>
            <person name="Isono K."/>
            <person name="Choi S."/>
            <person name="Ohtsubo E."/>
            <person name="Baba T."/>
            <person name="Wanner B.L."/>
            <person name="Mori H."/>
            <person name="Horiuchi T."/>
        </authorList>
    </citation>
    <scope>NUCLEOTIDE SEQUENCE [LARGE SCALE GENOMIC DNA]</scope>
    <source>
        <strain>K12 / W3110 / ATCC 27325 / DSM 5911</strain>
    </source>
</reference>
<reference key="6">
    <citation type="journal article" date="1987" name="J. Biol. Chem.">
        <title>Purification and characterization of a glycine betaine binding protein from Escherichia coli.</title>
        <authorList>
            <person name="Barron A."/>
            <person name="Jung J.U."/>
            <person name="Villarejo W."/>
        </authorList>
    </citation>
    <scope>PROTEIN SEQUENCE OF 22-34</scope>
    <scope>FUNCTION IN GLYCINE BETAINE TRANSPORT</scope>
    <scope>SUBCELLULAR LOCATION</scope>
</reference>
<reference key="7">
    <citation type="journal article" date="1995" name="Mol. Gen. Genet.">
        <title>The osmoprotectant proline betaine is a major substrate for the binding-protein-dependent transport system ProU of Escherichia coli K-12.</title>
        <authorList>
            <person name="Haardt M."/>
            <person name="Kempf B."/>
            <person name="Faatz E."/>
            <person name="Bremer E."/>
        </authorList>
    </citation>
    <scope>FUNCTION IN PROLINE BETAINE TRANSPORT</scope>
    <scope>SUBCELLULAR LOCATION</scope>
</reference>
<reference key="8">
    <citation type="journal article" date="2003" name="Res. Microbiol.">
        <title>Changes in Escherichia coli transcriptome during acclimatization at low temperature.</title>
        <authorList>
            <person name="Polissi A."/>
            <person name="De Laurentis W."/>
            <person name="Zangrossi S."/>
            <person name="Briani F."/>
            <person name="Longhi V."/>
            <person name="Pesole G."/>
            <person name="Deho G."/>
        </authorList>
    </citation>
    <scope>INDUCTION BY COLD SHOCK</scope>
    <source>
        <strain>K12 / MG1655 / ATCC 47076</strain>
    </source>
</reference>
<reference key="9">
    <citation type="journal article" date="2013" name="Mol. Membr. Biol.">
        <title>Functional reconstitution and osmoregulatory properties of the ProU ABC transporter from Escherichia coli.</title>
        <authorList>
            <person name="Gul N."/>
            <person name="Poolman B."/>
        </authorList>
    </citation>
    <scope>FUNCTION IN GLYCINE BETAINE TRANSPORT</scope>
    <scope>SUBUNIT</scope>
    <source>
        <strain>K12</strain>
    </source>
</reference>
<reference key="10">
    <citation type="journal article" date="2004" name="J. Biol. Chem.">
        <title>Cation-pi interactions as determinants for binding of the compatible solutes glycine betaine and proline betaine by the periplasmic ligand-binding protein ProX from Escherichia coli.</title>
        <authorList>
            <person name="Schiefner A."/>
            <person name="Breed J."/>
            <person name="Bosser L."/>
            <person name="Kneip S."/>
            <person name="Gade J."/>
            <person name="Holtmann G."/>
            <person name="Diederichs K."/>
            <person name="Welte W."/>
            <person name="Bremer E."/>
        </authorList>
    </citation>
    <scope>X-RAY CRYSTALLOGRAPHY (1.59 ANGSTROMS) OF 22-330 IN COMPLEXES WITH GLYCINE BETAINE AND PROLINE BETAINE</scope>
    <scope>DISULFIDE BOND</scope>
    <scope>FUNCTION</scope>
    <source>
        <strain>K12</strain>
    </source>
</reference>
<organism>
    <name type="scientific">Escherichia coli (strain K12)</name>
    <dbReference type="NCBI Taxonomy" id="83333"/>
    <lineage>
        <taxon>Bacteria</taxon>
        <taxon>Pseudomonadati</taxon>
        <taxon>Pseudomonadota</taxon>
        <taxon>Gammaproteobacteria</taxon>
        <taxon>Enterobacterales</taxon>
        <taxon>Enterobacteriaceae</taxon>
        <taxon>Escherichia</taxon>
    </lineage>
</organism>